<proteinExistence type="inferred from homology"/>
<evidence type="ECO:0000255" key="1">
    <source>
        <dbReference type="HAMAP-Rule" id="MF_00107"/>
    </source>
</evidence>
<dbReference type="EC" id="4.6.1.12" evidence="1"/>
<dbReference type="EMBL" id="CP000727">
    <property type="protein sequence ID" value="ABS36397.1"/>
    <property type="molecule type" value="Genomic_DNA"/>
</dbReference>
<dbReference type="EMBL" id="AM412317">
    <property type="protein sequence ID" value="CAL81622.1"/>
    <property type="molecule type" value="Genomic_DNA"/>
</dbReference>
<dbReference type="RefSeq" id="WP_011947931.1">
    <property type="nucleotide sequence ID" value="NC_009698.1"/>
</dbReference>
<dbReference type="RefSeq" id="YP_001252615.1">
    <property type="nucleotide sequence ID" value="NC_009495.1"/>
</dbReference>
<dbReference type="RefSeq" id="YP_001386025.1">
    <property type="nucleotide sequence ID" value="NC_009698.1"/>
</dbReference>
<dbReference type="SMR" id="A5HXW3"/>
<dbReference type="GeneID" id="5184321"/>
<dbReference type="KEGG" id="cbh:CLC_0114"/>
<dbReference type="KEGG" id="cbo:CBO0066"/>
<dbReference type="PATRIC" id="fig|413999.7.peg.68"/>
<dbReference type="HOGENOM" id="CLU_084630_2_0_9"/>
<dbReference type="UniPathway" id="UPA00056">
    <property type="reaction ID" value="UER00095"/>
</dbReference>
<dbReference type="PRO" id="PR:A5HXW3"/>
<dbReference type="Proteomes" id="UP000001986">
    <property type="component" value="Chromosome"/>
</dbReference>
<dbReference type="GO" id="GO:0008685">
    <property type="term" value="F:2-C-methyl-D-erythritol 2,4-cyclodiphosphate synthase activity"/>
    <property type="evidence" value="ECO:0000318"/>
    <property type="project" value="GO_Central"/>
</dbReference>
<dbReference type="GO" id="GO:0046872">
    <property type="term" value="F:metal ion binding"/>
    <property type="evidence" value="ECO:0007669"/>
    <property type="project" value="UniProtKB-KW"/>
</dbReference>
<dbReference type="GO" id="GO:0019288">
    <property type="term" value="P:isopentenyl diphosphate biosynthetic process, methylerythritol 4-phosphate pathway"/>
    <property type="evidence" value="ECO:0007669"/>
    <property type="project" value="UniProtKB-UniRule"/>
</dbReference>
<dbReference type="GO" id="GO:0016114">
    <property type="term" value="P:terpenoid biosynthetic process"/>
    <property type="evidence" value="ECO:0007669"/>
    <property type="project" value="InterPro"/>
</dbReference>
<dbReference type="CDD" id="cd00554">
    <property type="entry name" value="MECDP_synthase"/>
    <property type="match status" value="1"/>
</dbReference>
<dbReference type="FunFam" id="3.30.1330.50:FF:000001">
    <property type="entry name" value="2-C-methyl-D-erythritol 2,4-cyclodiphosphate synthase"/>
    <property type="match status" value="1"/>
</dbReference>
<dbReference type="Gene3D" id="3.30.1330.50">
    <property type="entry name" value="2-C-methyl-D-erythritol 2,4-cyclodiphosphate synthase"/>
    <property type="match status" value="1"/>
</dbReference>
<dbReference type="HAMAP" id="MF_00107">
    <property type="entry name" value="IspF"/>
    <property type="match status" value="1"/>
</dbReference>
<dbReference type="InterPro" id="IPR003526">
    <property type="entry name" value="MECDP_synthase"/>
</dbReference>
<dbReference type="InterPro" id="IPR020555">
    <property type="entry name" value="MECDP_synthase_CS"/>
</dbReference>
<dbReference type="InterPro" id="IPR036571">
    <property type="entry name" value="MECDP_synthase_sf"/>
</dbReference>
<dbReference type="NCBIfam" id="TIGR00151">
    <property type="entry name" value="ispF"/>
    <property type="match status" value="1"/>
</dbReference>
<dbReference type="PANTHER" id="PTHR43181">
    <property type="entry name" value="2-C-METHYL-D-ERYTHRITOL 2,4-CYCLODIPHOSPHATE SYNTHASE, CHLOROPLASTIC"/>
    <property type="match status" value="1"/>
</dbReference>
<dbReference type="PANTHER" id="PTHR43181:SF1">
    <property type="entry name" value="2-C-METHYL-D-ERYTHRITOL 2,4-CYCLODIPHOSPHATE SYNTHASE, CHLOROPLASTIC"/>
    <property type="match status" value="1"/>
</dbReference>
<dbReference type="Pfam" id="PF02542">
    <property type="entry name" value="YgbB"/>
    <property type="match status" value="1"/>
</dbReference>
<dbReference type="SUPFAM" id="SSF69765">
    <property type="entry name" value="IpsF-like"/>
    <property type="match status" value="1"/>
</dbReference>
<dbReference type="PROSITE" id="PS01350">
    <property type="entry name" value="ISPF"/>
    <property type="match status" value="1"/>
</dbReference>
<organism>
    <name type="scientific">Clostridium botulinum (strain Hall / ATCC 3502 / NCTC 13319 / Type A)</name>
    <dbReference type="NCBI Taxonomy" id="441771"/>
    <lineage>
        <taxon>Bacteria</taxon>
        <taxon>Bacillati</taxon>
        <taxon>Bacillota</taxon>
        <taxon>Clostridia</taxon>
        <taxon>Eubacteriales</taxon>
        <taxon>Clostridiaceae</taxon>
        <taxon>Clostridium</taxon>
    </lineage>
</organism>
<name>ISPF_CLOBH</name>
<sequence length="155" mass="16863">MRIGLGYDVHKLVENRPLIIGGVTIPHDKGLLGHSDADVLVHAIMDALLGAAALGDIGKHFPDSDKNFKNISSLLLLSKVKDLINKEGYKIVNIDCTIIAQKPKMLYHIDAMKKNICKCLKLDNNMLNIKATTEEGLGFTGKEEGISANAICLLD</sequence>
<gene>
    <name evidence="1" type="primary">ispF</name>
    <name type="ordered locus">CBO0066</name>
    <name type="ordered locus">CLC_0114</name>
</gene>
<keyword id="KW-0414">Isoprene biosynthesis</keyword>
<keyword id="KW-0456">Lyase</keyword>
<keyword id="KW-0479">Metal-binding</keyword>
<keyword id="KW-1185">Reference proteome</keyword>
<reference key="1">
    <citation type="journal article" date="2007" name="Genome Res.">
        <title>Genome sequence of a proteolytic (Group I) Clostridium botulinum strain Hall A and comparative analysis of the clostridial genomes.</title>
        <authorList>
            <person name="Sebaihia M."/>
            <person name="Peck M.W."/>
            <person name="Minton N.P."/>
            <person name="Thomson N.R."/>
            <person name="Holden M.T.G."/>
            <person name="Mitchell W.J."/>
            <person name="Carter A.T."/>
            <person name="Bentley S.D."/>
            <person name="Mason D.R."/>
            <person name="Crossman L."/>
            <person name="Paul C.J."/>
            <person name="Ivens A."/>
            <person name="Wells-Bennik M.H.J."/>
            <person name="Davis I.J."/>
            <person name="Cerdeno-Tarraga A.M."/>
            <person name="Churcher C."/>
            <person name="Quail M.A."/>
            <person name="Chillingworth T."/>
            <person name="Feltwell T."/>
            <person name="Fraser A."/>
            <person name="Goodhead I."/>
            <person name="Hance Z."/>
            <person name="Jagels K."/>
            <person name="Larke N."/>
            <person name="Maddison M."/>
            <person name="Moule S."/>
            <person name="Mungall K."/>
            <person name="Norbertczak H."/>
            <person name="Rabbinowitsch E."/>
            <person name="Sanders M."/>
            <person name="Simmonds M."/>
            <person name="White B."/>
            <person name="Whithead S."/>
            <person name="Parkhill J."/>
        </authorList>
    </citation>
    <scope>NUCLEOTIDE SEQUENCE [LARGE SCALE GENOMIC DNA]</scope>
    <source>
        <strain>Hall / ATCC 3502 / NCTC 13319 / Type A</strain>
    </source>
</reference>
<reference key="2">
    <citation type="journal article" date="2007" name="PLoS ONE">
        <title>Analysis of the neurotoxin complex genes in Clostridium botulinum A1-A4 and B1 strains: BoNT/A3, /Ba4 and /B1 clusters are located within plasmids.</title>
        <authorList>
            <person name="Smith T.J."/>
            <person name="Hill K.K."/>
            <person name="Foley B.T."/>
            <person name="Detter J.C."/>
            <person name="Munk A.C."/>
            <person name="Bruce D.C."/>
            <person name="Doggett N.A."/>
            <person name="Smith L.A."/>
            <person name="Marks J.D."/>
            <person name="Xie G."/>
            <person name="Brettin T.S."/>
        </authorList>
    </citation>
    <scope>NUCLEOTIDE SEQUENCE [LARGE SCALE GENOMIC DNA]</scope>
    <source>
        <strain>Hall / ATCC 3502 / NCTC 13319 / Type A</strain>
    </source>
</reference>
<comment type="function">
    <text evidence="1">Involved in the biosynthesis of isopentenyl diphosphate (IPP) and dimethylallyl diphosphate (DMAPP), two major building blocks of isoprenoid compounds. Catalyzes the conversion of 4-diphosphocytidyl-2-C-methyl-D-erythritol 2-phosphate (CDP-ME2P) to 2-C-methyl-D-erythritol 2,4-cyclodiphosphate (ME-CPP) with a corresponding release of cytidine 5-monophosphate (CMP).</text>
</comment>
<comment type="catalytic activity">
    <reaction evidence="1">
        <text>4-CDP-2-C-methyl-D-erythritol 2-phosphate = 2-C-methyl-D-erythritol 2,4-cyclic diphosphate + CMP</text>
        <dbReference type="Rhea" id="RHEA:23864"/>
        <dbReference type="ChEBI" id="CHEBI:57919"/>
        <dbReference type="ChEBI" id="CHEBI:58483"/>
        <dbReference type="ChEBI" id="CHEBI:60377"/>
        <dbReference type="EC" id="4.6.1.12"/>
    </reaction>
</comment>
<comment type="cofactor">
    <cofactor evidence="1">
        <name>a divalent metal cation</name>
        <dbReference type="ChEBI" id="CHEBI:60240"/>
    </cofactor>
    <text evidence="1">Binds 1 divalent metal cation per subunit.</text>
</comment>
<comment type="pathway">
    <text evidence="1">Isoprenoid biosynthesis; isopentenyl diphosphate biosynthesis via DXP pathway; isopentenyl diphosphate from 1-deoxy-D-xylulose 5-phosphate: step 4/6.</text>
</comment>
<comment type="subunit">
    <text evidence="1">Homotrimer.</text>
</comment>
<comment type="similarity">
    <text evidence="1">Belongs to the IspF family.</text>
</comment>
<accession>A5HXW3</accession>
<accession>A7FZY7</accession>
<protein>
    <recommendedName>
        <fullName evidence="1">2-C-methyl-D-erythritol 2,4-cyclodiphosphate synthase</fullName>
        <shortName evidence="1">MECDP-synthase</shortName>
        <shortName evidence="1">MECPP-synthase</shortName>
        <shortName evidence="1">MECPS</shortName>
        <ecNumber evidence="1">4.6.1.12</ecNumber>
    </recommendedName>
</protein>
<feature type="chain" id="PRO_1000022824" description="2-C-methyl-D-erythritol 2,4-cyclodiphosphate synthase">
    <location>
        <begin position="1"/>
        <end position="155"/>
    </location>
</feature>
<feature type="binding site" evidence="1">
    <location>
        <begin position="8"/>
        <end position="10"/>
    </location>
    <ligand>
        <name>4-CDP-2-C-methyl-D-erythritol 2-phosphate</name>
        <dbReference type="ChEBI" id="CHEBI:57919"/>
    </ligand>
</feature>
<feature type="binding site" evidence="1">
    <location>
        <position position="8"/>
    </location>
    <ligand>
        <name>a divalent metal cation</name>
        <dbReference type="ChEBI" id="CHEBI:60240"/>
    </ligand>
</feature>
<feature type="binding site" evidence="1">
    <location>
        <position position="10"/>
    </location>
    <ligand>
        <name>a divalent metal cation</name>
        <dbReference type="ChEBI" id="CHEBI:60240"/>
    </ligand>
</feature>
<feature type="binding site" evidence="1">
    <location>
        <begin position="34"/>
        <end position="35"/>
    </location>
    <ligand>
        <name>4-CDP-2-C-methyl-D-erythritol 2-phosphate</name>
        <dbReference type="ChEBI" id="CHEBI:57919"/>
    </ligand>
</feature>
<feature type="binding site" evidence="1">
    <location>
        <position position="42"/>
    </location>
    <ligand>
        <name>a divalent metal cation</name>
        <dbReference type="ChEBI" id="CHEBI:60240"/>
    </ligand>
</feature>
<feature type="binding site" evidence="1">
    <location>
        <begin position="56"/>
        <end position="58"/>
    </location>
    <ligand>
        <name>4-CDP-2-C-methyl-D-erythritol 2-phosphate</name>
        <dbReference type="ChEBI" id="CHEBI:57919"/>
    </ligand>
</feature>
<feature type="binding site" evidence="1">
    <location>
        <begin position="61"/>
        <end position="65"/>
    </location>
    <ligand>
        <name>4-CDP-2-C-methyl-D-erythritol 2-phosphate</name>
        <dbReference type="ChEBI" id="CHEBI:57919"/>
    </ligand>
</feature>
<feature type="binding site" evidence="1">
    <location>
        <begin position="100"/>
        <end position="106"/>
    </location>
    <ligand>
        <name>4-CDP-2-C-methyl-D-erythritol 2-phosphate</name>
        <dbReference type="ChEBI" id="CHEBI:57919"/>
    </ligand>
</feature>
<feature type="binding site" evidence="1">
    <location>
        <begin position="132"/>
        <end position="135"/>
    </location>
    <ligand>
        <name>4-CDP-2-C-methyl-D-erythritol 2-phosphate</name>
        <dbReference type="ChEBI" id="CHEBI:57919"/>
    </ligand>
</feature>
<feature type="binding site" evidence="1">
    <location>
        <position position="139"/>
    </location>
    <ligand>
        <name>4-CDP-2-C-methyl-D-erythritol 2-phosphate</name>
        <dbReference type="ChEBI" id="CHEBI:57919"/>
    </ligand>
</feature>
<feature type="binding site" evidence="1">
    <location>
        <position position="142"/>
    </location>
    <ligand>
        <name>4-CDP-2-C-methyl-D-erythritol 2-phosphate</name>
        <dbReference type="ChEBI" id="CHEBI:57919"/>
    </ligand>
</feature>
<feature type="site" description="Transition state stabilizer" evidence="1">
    <location>
        <position position="34"/>
    </location>
</feature>
<feature type="site" description="Transition state stabilizer" evidence="1">
    <location>
        <position position="133"/>
    </location>
</feature>